<gene>
    <name evidence="1" type="primary">rhaT</name>
    <name type="ordered locus">SPAB_05017</name>
</gene>
<feature type="chain" id="PRO_1000087595" description="L-rhamnose-proton symporter">
    <location>
        <begin position="1"/>
        <end position="344"/>
    </location>
</feature>
<feature type="transmembrane region" description="Helical" evidence="1">
    <location>
        <begin position="4"/>
        <end position="24"/>
    </location>
</feature>
<feature type="transmembrane region" description="Helical" evidence="1">
    <location>
        <begin position="38"/>
        <end position="58"/>
    </location>
</feature>
<feature type="transmembrane region" description="Helical" evidence="1">
    <location>
        <begin position="68"/>
        <end position="88"/>
    </location>
</feature>
<feature type="transmembrane region" description="Helical" evidence="1">
    <location>
        <begin position="101"/>
        <end position="121"/>
    </location>
</feature>
<feature type="transmembrane region" description="Helical" evidence="1">
    <location>
        <begin position="137"/>
        <end position="157"/>
    </location>
</feature>
<feature type="transmembrane region" description="Helical" evidence="1">
    <location>
        <begin position="175"/>
        <end position="195"/>
    </location>
</feature>
<feature type="transmembrane region" description="Helical" evidence="1">
    <location>
        <begin position="214"/>
        <end position="234"/>
    </location>
</feature>
<feature type="transmembrane region" description="Helical" evidence="1">
    <location>
        <begin position="259"/>
        <end position="279"/>
    </location>
</feature>
<feature type="transmembrane region" description="Helical" evidence="1">
    <location>
        <begin position="290"/>
        <end position="310"/>
    </location>
</feature>
<feature type="transmembrane region" description="Helical" evidence="1">
    <location>
        <begin position="321"/>
        <end position="341"/>
    </location>
</feature>
<evidence type="ECO:0000255" key="1">
    <source>
        <dbReference type="HAMAP-Rule" id="MF_01532"/>
    </source>
</evidence>
<comment type="function">
    <text evidence="1">Uptake of L-rhamnose across the cytoplasmic membrane with the concomitant transport of protons into the cell (symport system).</text>
</comment>
<comment type="catalytic activity">
    <reaction evidence="1">
        <text>L-rhamnopyranose(in) + H(+)(in) = L-rhamnopyranose(out) + H(+)(out)</text>
        <dbReference type="Rhea" id="RHEA:29947"/>
        <dbReference type="ChEBI" id="CHEBI:15378"/>
        <dbReference type="ChEBI" id="CHEBI:62346"/>
    </reaction>
    <physiologicalReaction direction="right-to-left" evidence="1">
        <dbReference type="Rhea" id="RHEA:29949"/>
    </physiologicalReaction>
</comment>
<comment type="subcellular location">
    <subcellularLocation>
        <location evidence="1">Cell inner membrane</location>
        <topology evidence="1">Multi-pass membrane protein</topology>
    </subcellularLocation>
</comment>
<comment type="similarity">
    <text evidence="1">Belongs to the L-rhamnose transporter (TC 2.A.7.6) family.</text>
</comment>
<dbReference type="EMBL" id="CP000886">
    <property type="protein sequence ID" value="ABX70308.1"/>
    <property type="molecule type" value="Genomic_DNA"/>
</dbReference>
<dbReference type="RefSeq" id="WP_000063541.1">
    <property type="nucleotide sequence ID" value="NC_010102.1"/>
</dbReference>
<dbReference type="KEGG" id="spq:SPAB_05017"/>
<dbReference type="PATRIC" id="fig|1016998.12.peg.4709"/>
<dbReference type="HOGENOM" id="CLU_066437_0_0_6"/>
<dbReference type="BioCyc" id="SENT1016998:SPAB_RS20415-MONOMER"/>
<dbReference type="Proteomes" id="UP000008556">
    <property type="component" value="Chromosome"/>
</dbReference>
<dbReference type="GO" id="GO:0005886">
    <property type="term" value="C:plasma membrane"/>
    <property type="evidence" value="ECO:0007669"/>
    <property type="project" value="UniProtKB-SubCell"/>
</dbReference>
<dbReference type="GO" id="GO:0015153">
    <property type="term" value="F:rhamnose transmembrane transporter activity"/>
    <property type="evidence" value="ECO:0007669"/>
    <property type="project" value="UniProtKB-UniRule"/>
</dbReference>
<dbReference type="GO" id="GO:0015293">
    <property type="term" value="F:symporter activity"/>
    <property type="evidence" value="ECO:0007669"/>
    <property type="project" value="UniProtKB-KW"/>
</dbReference>
<dbReference type="HAMAP" id="MF_01532">
    <property type="entry name" value="RhaT"/>
    <property type="match status" value="1"/>
</dbReference>
<dbReference type="InterPro" id="IPR004673">
    <property type="entry name" value="L-rhamnose-proton_sym_RhaT"/>
</dbReference>
<dbReference type="NCBIfam" id="NF010021">
    <property type="entry name" value="PRK13499.1-1"/>
    <property type="match status" value="1"/>
</dbReference>
<dbReference type="NCBIfam" id="NF010023">
    <property type="entry name" value="PRK13499.1-3"/>
    <property type="match status" value="1"/>
</dbReference>
<dbReference type="NCBIfam" id="TIGR00776">
    <property type="entry name" value="RhaT"/>
    <property type="match status" value="1"/>
</dbReference>
<dbReference type="Pfam" id="PF06379">
    <property type="entry name" value="RhaT"/>
    <property type="match status" value="1"/>
</dbReference>
<keyword id="KW-0997">Cell inner membrane</keyword>
<keyword id="KW-1003">Cell membrane</keyword>
<keyword id="KW-0472">Membrane</keyword>
<keyword id="KW-0762">Sugar transport</keyword>
<keyword id="KW-0769">Symport</keyword>
<keyword id="KW-0812">Transmembrane</keyword>
<keyword id="KW-1133">Transmembrane helix</keyword>
<keyword id="KW-0813">Transport</keyword>
<reference key="1">
    <citation type="submission" date="2007-11" db="EMBL/GenBank/DDBJ databases">
        <authorList>
            <consortium name="The Salmonella enterica serovar Paratyphi B Genome Sequencing Project"/>
            <person name="McClelland M."/>
            <person name="Sanderson E.K."/>
            <person name="Porwollik S."/>
            <person name="Spieth J."/>
            <person name="Clifton W.S."/>
            <person name="Fulton R."/>
            <person name="Cordes M."/>
            <person name="Wollam A."/>
            <person name="Shah N."/>
            <person name="Pepin K."/>
            <person name="Bhonagiri V."/>
            <person name="Nash W."/>
            <person name="Johnson M."/>
            <person name="Thiruvilangam P."/>
            <person name="Wilson R."/>
        </authorList>
    </citation>
    <scope>NUCLEOTIDE SEQUENCE [LARGE SCALE GENOMIC DNA]</scope>
    <source>
        <strain>ATCC BAA-1250 / SPB7</strain>
    </source>
</reference>
<name>RHAT_SALPB</name>
<proteinExistence type="inferred from homology"/>
<accession>A9MZD0</accession>
<sequence length="344" mass="37390">MSNAITMGIFWHLIGAASAACFYAPFKQVKQWSWETMWSVGGIVSWLILPWTISALLLPDFWAYYGQFNLSTLLPVFLFGAMWGIGNINYGLTMRYLGMSMGIGIAIGITLIVGTLMTPIINGNFDVLIHTEGGRMTLLGVFVALIGVGIVTRAGQLKERKMGIKAEEFNLKKGLLLAVMCGIFSAGMSFAMNAAKPMHEAAAALGVDPLYVALPSYVVIMGGGALVNLGFCFIRLAKVQNLSIKADFSLARPLIISNILLSALGGLMWYLQFFFYAWGHARIPAQYDYMSWMLHMSFYVLCGGLVGLVLKEWKNAGRRPVAVLSLGCVVIIIAANIVGLGMAS</sequence>
<protein>
    <recommendedName>
        <fullName evidence="1">L-rhamnose-proton symporter</fullName>
    </recommendedName>
    <alternativeName>
        <fullName evidence="1">L-rhamnose-H(+) transport protein</fullName>
    </alternativeName>
</protein>
<organism>
    <name type="scientific">Salmonella paratyphi B (strain ATCC BAA-1250 / SPB7)</name>
    <dbReference type="NCBI Taxonomy" id="1016998"/>
    <lineage>
        <taxon>Bacteria</taxon>
        <taxon>Pseudomonadati</taxon>
        <taxon>Pseudomonadota</taxon>
        <taxon>Gammaproteobacteria</taxon>
        <taxon>Enterobacterales</taxon>
        <taxon>Enterobacteriaceae</taxon>
        <taxon>Salmonella</taxon>
    </lineage>
</organism>